<sequence length="73" mass="8381">MSLELLSKLETKIQATLETIELLKMELEEEKQKSSTLSEHNQQLNEQNQQLQQELASWNEKVTGLVGLLNSEI</sequence>
<dbReference type="EMBL" id="CP000681">
    <property type="protein sequence ID" value="ABP77362.1"/>
    <property type="molecule type" value="Genomic_DNA"/>
</dbReference>
<dbReference type="SMR" id="A4YBM9"/>
<dbReference type="STRING" id="319224.Sputcn32_3654"/>
<dbReference type="KEGG" id="spc:Sputcn32_3654"/>
<dbReference type="eggNOG" id="COG3074">
    <property type="taxonomic scope" value="Bacteria"/>
</dbReference>
<dbReference type="HOGENOM" id="CLU_171174_1_0_6"/>
<dbReference type="GO" id="GO:0005737">
    <property type="term" value="C:cytoplasm"/>
    <property type="evidence" value="ECO:0007669"/>
    <property type="project" value="UniProtKB-SubCell"/>
</dbReference>
<dbReference type="GO" id="GO:0000917">
    <property type="term" value="P:division septum assembly"/>
    <property type="evidence" value="ECO:0007669"/>
    <property type="project" value="UniProtKB-KW"/>
</dbReference>
<dbReference type="GO" id="GO:0043093">
    <property type="term" value="P:FtsZ-dependent cytokinesis"/>
    <property type="evidence" value="ECO:0007669"/>
    <property type="project" value="UniProtKB-UniRule"/>
</dbReference>
<dbReference type="Gene3D" id="1.20.5.340">
    <property type="match status" value="1"/>
</dbReference>
<dbReference type="HAMAP" id="MF_01196">
    <property type="entry name" value="ZapB"/>
    <property type="match status" value="1"/>
</dbReference>
<dbReference type="InterPro" id="IPR009252">
    <property type="entry name" value="Cell_div_ZapB"/>
</dbReference>
<dbReference type="Pfam" id="PF06005">
    <property type="entry name" value="ZapB"/>
    <property type="match status" value="1"/>
</dbReference>
<organism>
    <name type="scientific">Shewanella putrefaciens (strain CN-32 / ATCC BAA-453)</name>
    <dbReference type="NCBI Taxonomy" id="319224"/>
    <lineage>
        <taxon>Bacteria</taxon>
        <taxon>Pseudomonadati</taxon>
        <taxon>Pseudomonadota</taxon>
        <taxon>Gammaproteobacteria</taxon>
        <taxon>Alteromonadales</taxon>
        <taxon>Shewanellaceae</taxon>
        <taxon>Shewanella</taxon>
    </lineage>
</organism>
<keyword id="KW-0131">Cell cycle</keyword>
<keyword id="KW-0132">Cell division</keyword>
<keyword id="KW-0175">Coiled coil</keyword>
<keyword id="KW-0963">Cytoplasm</keyword>
<keyword id="KW-0717">Septation</keyword>
<gene>
    <name evidence="1" type="primary">zapB</name>
    <name type="ordered locus">Sputcn32_3654</name>
</gene>
<comment type="function">
    <text evidence="1">Non-essential, abundant cell division factor that is required for proper Z-ring formation. It is recruited early to the divisome by direct interaction with FtsZ, stimulating Z-ring assembly and thereby promoting cell division earlier in the cell cycle. Its recruitment to the Z-ring requires functional FtsA or ZipA.</text>
</comment>
<comment type="subunit">
    <text evidence="1">Homodimer. The ends of the coiled-coil dimer bind to each other, forming polymers. Interacts with FtsZ.</text>
</comment>
<comment type="subcellular location">
    <subcellularLocation>
        <location>Cytoplasm</location>
    </subcellularLocation>
    <text evidence="1">Localizes to the septum at mid-cell, in a FtsZ-like pattern.</text>
</comment>
<comment type="similarity">
    <text evidence="1">Belongs to the ZapB family.</text>
</comment>
<proteinExistence type="inferred from homology"/>
<protein>
    <recommendedName>
        <fullName evidence="1">Cell division protein ZapB</fullName>
    </recommendedName>
</protein>
<evidence type="ECO:0000255" key="1">
    <source>
        <dbReference type="HAMAP-Rule" id="MF_01196"/>
    </source>
</evidence>
<evidence type="ECO:0000256" key="2">
    <source>
        <dbReference type="SAM" id="MobiDB-lite"/>
    </source>
</evidence>
<reference key="1">
    <citation type="submission" date="2007-04" db="EMBL/GenBank/DDBJ databases">
        <title>Complete sequence of Shewanella putrefaciens CN-32.</title>
        <authorList>
            <consortium name="US DOE Joint Genome Institute"/>
            <person name="Copeland A."/>
            <person name="Lucas S."/>
            <person name="Lapidus A."/>
            <person name="Barry K."/>
            <person name="Detter J.C."/>
            <person name="Glavina del Rio T."/>
            <person name="Hammon N."/>
            <person name="Israni S."/>
            <person name="Dalin E."/>
            <person name="Tice H."/>
            <person name="Pitluck S."/>
            <person name="Chain P."/>
            <person name="Malfatti S."/>
            <person name="Shin M."/>
            <person name="Vergez L."/>
            <person name="Schmutz J."/>
            <person name="Larimer F."/>
            <person name="Land M."/>
            <person name="Hauser L."/>
            <person name="Kyrpides N."/>
            <person name="Mikhailova N."/>
            <person name="Romine M.F."/>
            <person name="Fredrickson J."/>
            <person name="Tiedje J."/>
            <person name="Richardson P."/>
        </authorList>
    </citation>
    <scope>NUCLEOTIDE SEQUENCE [LARGE SCALE GENOMIC DNA]</scope>
    <source>
        <strain>CN-32 / ATCC BAA-453</strain>
    </source>
</reference>
<accession>A4YBM9</accession>
<feature type="chain" id="PRO_0000333928" description="Cell division protein ZapB">
    <location>
        <begin position="1"/>
        <end position="73"/>
    </location>
</feature>
<feature type="region of interest" description="Disordered" evidence="2">
    <location>
        <begin position="30"/>
        <end position="50"/>
    </location>
</feature>
<feature type="coiled-coil region" evidence="1">
    <location>
        <begin position="3"/>
        <end position="69"/>
    </location>
</feature>
<feature type="compositionally biased region" description="Low complexity" evidence="2">
    <location>
        <begin position="41"/>
        <end position="50"/>
    </location>
</feature>
<name>ZAPB_SHEPC</name>